<dbReference type="EMBL" id="CP000555">
    <property type="protein sequence ID" value="ABM95892.1"/>
    <property type="molecule type" value="Genomic_DNA"/>
</dbReference>
<dbReference type="RefSeq" id="WP_011830521.1">
    <property type="nucleotide sequence ID" value="NC_008825.1"/>
</dbReference>
<dbReference type="SMR" id="A2SK03"/>
<dbReference type="STRING" id="420662.Mpe_A2939"/>
<dbReference type="KEGG" id="mpt:Mpe_A2939"/>
<dbReference type="eggNOG" id="COG1327">
    <property type="taxonomic scope" value="Bacteria"/>
</dbReference>
<dbReference type="HOGENOM" id="CLU_108412_0_0_4"/>
<dbReference type="Proteomes" id="UP000000366">
    <property type="component" value="Chromosome"/>
</dbReference>
<dbReference type="GO" id="GO:0005524">
    <property type="term" value="F:ATP binding"/>
    <property type="evidence" value="ECO:0007669"/>
    <property type="project" value="UniProtKB-KW"/>
</dbReference>
<dbReference type="GO" id="GO:0003677">
    <property type="term" value="F:DNA binding"/>
    <property type="evidence" value="ECO:0007669"/>
    <property type="project" value="UniProtKB-KW"/>
</dbReference>
<dbReference type="GO" id="GO:0008270">
    <property type="term" value="F:zinc ion binding"/>
    <property type="evidence" value="ECO:0007669"/>
    <property type="project" value="UniProtKB-UniRule"/>
</dbReference>
<dbReference type="GO" id="GO:0045892">
    <property type="term" value="P:negative regulation of DNA-templated transcription"/>
    <property type="evidence" value="ECO:0007669"/>
    <property type="project" value="UniProtKB-UniRule"/>
</dbReference>
<dbReference type="HAMAP" id="MF_00440">
    <property type="entry name" value="NrdR"/>
    <property type="match status" value="1"/>
</dbReference>
<dbReference type="InterPro" id="IPR005144">
    <property type="entry name" value="ATP-cone_dom"/>
</dbReference>
<dbReference type="InterPro" id="IPR055173">
    <property type="entry name" value="NrdR-like_N"/>
</dbReference>
<dbReference type="InterPro" id="IPR003796">
    <property type="entry name" value="RNR_NrdR-like"/>
</dbReference>
<dbReference type="NCBIfam" id="TIGR00244">
    <property type="entry name" value="transcriptional regulator NrdR"/>
    <property type="match status" value="1"/>
</dbReference>
<dbReference type="PANTHER" id="PTHR30455">
    <property type="entry name" value="TRANSCRIPTIONAL REPRESSOR NRDR"/>
    <property type="match status" value="1"/>
</dbReference>
<dbReference type="PANTHER" id="PTHR30455:SF2">
    <property type="entry name" value="TRANSCRIPTIONAL REPRESSOR NRDR"/>
    <property type="match status" value="1"/>
</dbReference>
<dbReference type="Pfam" id="PF03477">
    <property type="entry name" value="ATP-cone"/>
    <property type="match status" value="1"/>
</dbReference>
<dbReference type="Pfam" id="PF22811">
    <property type="entry name" value="Zn_ribbon_NrdR"/>
    <property type="match status" value="1"/>
</dbReference>
<dbReference type="PROSITE" id="PS51161">
    <property type="entry name" value="ATP_CONE"/>
    <property type="match status" value="1"/>
</dbReference>
<reference key="1">
    <citation type="journal article" date="2007" name="J. Bacteriol.">
        <title>Whole-genome analysis of the methyl tert-butyl ether-degrading beta-proteobacterium Methylibium petroleiphilum PM1.</title>
        <authorList>
            <person name="Kane S.R."/>
            <person name="Chakicherla A.Y."/>
            <person name="Chain P.S.G."/>
            <person name="Schmidt R."/>
            <person name="Shin M.W."/>
            <person name="Legler T.C."/>
            <person name="Scow K.M."/>
            <person name="Larimer F.W."/>
            <person name="Lucas S.M."/>
            <person name="Richardson P.M."/>
            <person name="Hristova K.R."/>
        </authorList>
    </citation>
    <scope>NUCLEOTIDE SEQUENCE [LARGE SCALE GENOMIC DNA]</scope>
    <source>
        <strain>ATCC BAA-1232 / LMG 22953 / PM1</strain>
    </source>
</reference>
<accession>A2SK03</accession>
<keyword id="KW-0067">ATP-binding</keyword>
<keyword id="KW-0238">DNA-binding</keyword>
<keyword id="KW-0479">Metal-binding</keyword>
<keyword id="KW-0547">Nucleotide-binding</keyword>
<keyword id="KW-1185">Reference proteome</keyword>
<keyword id="KW-0678">Repressor</keyword>
<keyword id="KW-0804">Transcription</keyword>
<keyword id="KW-0805">Transcription regulation</keyword>
<keyword id="KW-0862">Zinc</keyword>
<keyword id="KW-0863">Zinc-finger</keyword>
<proteinExistence type="inferred from homology"/>
<gene>
    <name evidence="1" type="primary">nrdR</name>
    <name type="ordered locus">Mpe_A2939</name>
</gene>
<name>NRDR_METPP</name>
<comment type="function">
    <text evidence="1">Negatively regulates transcription of bacterial ribonucleotide reductase nrd genes and operons by binding to NrdR-boxes.</text>
</comment>
<comment type="cofactor">
    <cofactor evidence="1">
        <name>Zn(2+)</name>
        <dbReference type="ChEBI" id="CHEBI:29105"/>
    </cofactor>
    <text evidence="1">Binds 1 zinc ion.</text>
</comment>
<comment type="similarity">
    <text evidence="1">Belongs to the NrdR family.</text>
</comment>
<sequence length="147" mass="16882">MRCPFCGHEDTQVAETRESDEGDVIRRRRRCPSCDKRFTTYERAELAMPAIVKKDGSRSEFDRSKIRASMMLALRKRPVSIDQVEAALGRIEEKMLATAANEVPSAKIGEMVMRELKKLDKVAYVRFASVYRSFEGVDEFSRLIKDI</sequence>
<organism>
    <name type="scientific">Methylibium petroleiphilum (strain ATCC BAA-1232 / LMG 22953 / PM1)</name>
    <dbReference type="NCBI Taxonomy" id="420662"/>
    <lineage>
        <taxon>Bacteria</taxon>
        <taxon>Pseudomonadati</taxon>
        <taxon>Pseudomonadota</taxon>
        <taxon>Betaproteobacteria</taxon>
        <taxon>Burkholderiales</taxon>
        <taxon>Sphaerotilaceae</taxon>
        <taxon>Methylibium</taxon>
    </lineage>
</organism>
<protein>
    <recommendedName>
        <fullName evidence="1">Transcriptional repressor NrdR</fullName>
    </recommendedName>
</protein>
<feature type="chain" id="PRO_1000080773" description="Transcriptional repressor NrdR">
    <location>
        <begin position="1"/>
        <end position="147"/>
    </location>
</feature>
<feature type="domain" description="ATP-cone" evidence="1">
    <location>
        <begin position="49"/>
        <end position="139"/>
    </location>
</feature>
<feature type="zinc finger region" evidence="1">
    <location>
        <begin position="3"/>
        <end position="34"/>
    </location>
</feature>
<evidence type="ECO:0000255" key="1">
    <source>
        <dbReference type="HAMAP-Rule" id="MF_00440"/>
    </source>
</evidence>